<accession>B7NDR2</accession>
<gene>
    <name evidence="1" type="primary">mscL</name>
    <name type="ordered locus">ECUMN_3764</name>
</gene>
<evidence type="ECO:0000255" key="1">
    <source>
        <dbReference type="HAMAP-Rule" id="MF_00115"/>
    </source>
</evidence>
<comment type="function">
    <text evidence="1">Channel that opens in response to stretch forces in the membrane lipid bilayer. May participate in the regulation of osmotic pressure changes within the cell.</text>
</comment>
<comment type="subunit">
    <text evidence="1">Homopentamer.</text>
</comment>
<comment type="subcellular location">
    <subcellularLocation>
        <location evidence="1">Cell inner membrane</location>
        <topology evidence="1">Multi-pass membrane protein</topology>
    </subcellularLocation>
</comment>
<comment type="similarity">
    <text evidence="1">Belongs to the MscL family.</text>
</comment>
<keyword id="KW-0997">Cell inner membrane</keyword>
<keyword id="KW-1003">Cell membrane</keyword>
<keyword id="KW-0407">Ion channel</keyword>
<keyword id="KW-0406">Ion transport</keyword>
<keyword id="KW-0472">Membrane</keyword>
<keyword id="KW-0812">Transmembrane</keyword>
<keyword id="KW-1133">Transmembrane helix</keyword>
<keyword id="KW-0813">Transport</keyword>
<dbReference type="EMBL" id="CU928163">
    <property type="protein sequence ID" value="CAR14912.1"/>
    <property type="molecule type" value="Genomic_DNA"/>
</dbReference>
<dbReference type="RefSeq" id="WP_000022442.1">
    <property type="nucleotide sequence ID" value="NC_011751.1"/>
</dbReference>
<dbReference type="RefSeq" id="YP_002414417.1">
    <property type="nucleotide sequence ID" value="NC_011751.1"/>
</dbReference>
<dbReference type="SMR" id="B7NDR2"/>
<dbReference type="STRING" id="585056.ECUMN_3764"/>
<dbReference type="GeneID" id="75173461"/>
<dbReference type="KEGG" id="eum:ECUMN_3764"/>
<dbReference type="PATRIC" id="fig|585056.7.peg.3939"/>
<dbReference type="HOGENOM" id="CLU_095787_0_0_6"/>
<dbReference type="Proteomes" id="UP000007097">
    <property type="component" value="Chromosome"/>
</dbReference>
<dbReference type="GO" id="GO:0005886">
    <property type="term" value="C:plasma membrane"/>
    <property type="evidence" value="ECO:0007669"/>
    <property type="project" value="UniProtKB-SubCell"/>
</dbReference>
<dbReference type="GO" id="GO:0008381">
    <property type="term" value="F:mechanosensitive monoatomic ion channel activity"/>
    <property type="evidence" value="ECO:0007669"/>
    <property type="project" value="UniProtKB-UniRule"/>
</dbReference>
<dbReference type="FunFam" id="1.10.1200.120:FF:000001">
    <property type="entry name" value="Large-conductance mechanosensitive channel"/>
    <property type="match status" value="1"/>
</dbReference>
<dbReference type="Gene3D" id="1.10.1200.120">
    <property type="entry name" value="Large-conductance mechanosensitive channel, MscL, domain 1"/>
    <property type="match status" value="1"/>
</dbReference>
<dbReference type="HAMAP" id="MF_00115">
    <property type="entry name" value="MscL"/>
    <property type="match status" value="1"/>
</dbReference>
<dbReference type="InterPro" id="IPR019823">
    <property type="entry name" value="Mechanosensitive_channel_CS"/>
</dbReference>
<dbReference type="InterPro" id="IPR001185">
    <property type="entry name" value="MS_channel"/>
</dbReference>
<dbReference type="InterPro" id="IPR037673">
    <property type="entry name" value="MSC/AndL"/>
</dbReference>
<dbReference type="InterPro" id="IPR036019">
    <property type="entry name" value="MscL_channel"/>
</dbReference>
<dbReference type="NCBIfam" id="TIGR00220">
    <property type="entry name" value="mscL"/>
    <property type="match status" value="1"/>
</dbReference>
<dbReference type="NCBIfam" id="NF001841">
    <property type="entry name" value="PRK00567.1-1"/>
    <property type="match status" value="1"/>
</dbReference>
<dbReference type="NCBIfam" id="NF001843">
    <property type="entry name" value="PRK00567.1-4"/>
    <property type="match status" value="1"/>
</dbReference>
<dbReference type="PANTHER" id="PTHR30266:SF2">
    <property type="entry name" value="LARGE-CONDUCTANCE MECHANOSENSITIVE CHANNEL"/>
    <property type="match status" value="1"/>
</dbReference>
<dbReference type="PANTHER" id="PTHR30266">
    <property type="entry name" value="MECHANOSENSITIVE CHANNEL MSCL"/>
    <property type="match status" value="1"/>
</dbReference>
<dbReference type="Pfam" id="PF01741">
    <property type="entry name" value="MscL"/>
    <property type="match status" value="1"/>
</dbReference>
<dbReference type="PRINTS" id="PR01264">
    <property type="entry name" value="MECHCHANNEL"/>
</dbReference>
<dbReference type="SUPFAM" id="SSF81330">
    <property type="entry name" value="Gated mechanosensitive channel"/>
    <property type="match status" value="1"/>
</dbReference>
<dbReference type="PROSITE" id="PS01327">
    <property type="entry name" value="MSCL"/>
    <property type="match status" value="1"/>
</dbReference>
<feature type="chain" id="PRO_1000191367" description="Large-conductance mechanosensitive channel">
    <location>
        <begin position="1"/>
        <end position="136"/>
    </location>
</feature>
<feature type="transmembrane region" description="Helical" evidence="1">
    <location>
        <begin position="10"/>
        <end position="30"/>
    </location>
</feature>
<feature type="transmembrane region" description="Helical" evidence="1">
    <location>
        <begin position="76"/>
        <end position="96"/>
    </location>
</feature>
<name>MSCL_ECOLU</name>
<organism>
    <name type="scientific">Escherichia coli O17:K52:H18 (strain UMN026 / ExPEC)</name>
    <dbReference type="NCBI Taxonomy" id="585056"/>
    <lineage>
        <taxon>Bacteria</taxon>
        <taxon>Pseudomonadati</taxon>
        <taxon>Pseudomonadota</taxon>
        <taxon>Gammaproteobacteria</taxon>
        <taxon>Enterobacterales</taxon>
        <taxon>Enterobacteriaceae</taxon>
        <taxon>Escherichia</taxon>
    </lineage>
</organism>
<proteinExistence type="inferred from homology"/>
<reference key="1">
    <citation type="journal article" date="2009" name="PLoS Genet.">
        <title>Organised genome dynamics in the Escherichia coli species results in highly diverse adaptive paths.</title>
        <authorList>
            <person name="Touchon M."/>
            <person name="Hoede C."/>
            <person name="Tenaillon O."/>
            <person name="Barbe V."/>
            <person name="Baeriswyl S."/>
            <person name="Bidet P."/>
            <person name="Bingen E."/>
            <person name="Bonacorsi S."/>
            <person name="Bouchier C."/>
            <person name="Bouvet O."/>
            <person name="Calteau A."/>
            <person name="Chiapello H."/>
            <person name="Clermont O."/>
            <person name="Cruveiller S."/>
            <person name="Danchin A."/>
            <person name="Diard M."/>
            <person name="Dossat C."/>
            <person name="Karoui M.E."/>
            <person name="Frapy E."/>
            <person name="Garry L."/>
            <person name="Ghigo J.M."/>
            <person name="Gilles A.M."/>
            <person name="Johnson J."/>
            <person name="Le Bouguenec C."/>
            <person name="Lescat M."/>
            <person name="Mangenot S."/>
            <person name="Martinez-Jehanne V."/>
            <person name="Matic I."/>
            <person name="Nassif X."/>
            <person name="Oztas S."/>
            <person name="Petit M.A."/>
            <person name="Pichon C."/>
            <person name="Rouy Z."/>
            <person name="Ruf C.S."/>
            <person name="Schneider D."/>
            <person name="Tourret J."/>
            <person name="Vacherie B."/>
            <person name="Vallenet D."/>
            <person name="Medigue C."/>
            <person name="Rocha E.P.C."/>
            <person name="Denamur E."/>
        </authorList>
    </citation>
    <scope>NUCLEOTIDE SEQUENCE [LARGE SCALE GENOMIC DNA]</scope>
    <source>
        <strain>UMN026 / ExPEC</strain>
    </source>
</reference>
<sequence>MSIIKEFREFAMRGNVVDLAVGVIIGAAFGKIVSSLVADIIMPPLGLLIGGIDFKQFAVTLRDAQGDIPAVVMHYGVFIQNVFDFLIVAFAIFMAIKLINKLNRKKEEPAAAPAPTKEEVLLTEIRDLLKEQNNRS</sequence>
<protein>
    <recommendedName>
        <fullName evidence="1">Large-conductance mechanosensitive channel</fullName>
    </recommendedName>
</protein>